<accession>Q1CNR7</accession>
<accession>D1Q346</accession>
<name>LAMB1_YERPN</name>
<protein>
    <recommendedName>
        <fullName evidence="1">Maltoporin 1</fullName>
    </recommendedName>
    <alternativeName>
        <fullName evidence="1">Maltose-inducible porin 1</fullName>
    </alternativeName>
</protein>
<proteinExistence type="inferred from homology"/>
<feature type="signal peptide" evidence="1">
    <location>
        <begin position="1"/>
        <end position="24"/>
    </location>
</feature>
<feature type="chain" id="PRO_5000115031" description="Maltoporin 1">
    <location>
        <begin position="25"/>
        <end position="423"/>
    </location>
</feature>
<feature type="site" description="Greasy slide, important in sugar transport" evidence="1">
    <location>
        <position position="30"/>
    </location>
</feature>
<feature type="site" description="Greasy slide, important in sugar transport" evidence="1">
    <location>
        <position position="65"/>
    </location>
</feature>
<feature type="site" description="Greasy slide, important in sugar transport" evidence="1">
    <location>
        <position position="98"/>
    </location>
</feature>
<feature type="site" description="Important in sugar transport" evidence="1">
    <location>
        <position position="142"/>
    </location>
</feature>
<feature type="site" description="Greasy slide, important in sugar transport" evidence="1">
    <location>
        <position position="250"/>
    </location>
</feature>
<feature type="site" description="Greasy slide, important in sugar transport" evidence="1">
    <location>
        <position position="370"/>
    </location>
</feature>
<feature type="site" description="Greasy slide, important in sugar transport" evidence="1">
    <location>
        <position position="422"/>
    </location>
</feature>
<dbReference type="EMBL" id="CP000305">
    <property type="protein sequence ID" value="ABG16363.1"/>
    <property type="molecule type" value="Genomic_DNA"/>
</dbReference>
<dbReference type="EMBL" id="ACNQ01000019">
    <property type="protein sequence ID" value="EEO74949.1"/>
    <property type="molecule type" value="Genomic_DNA"/>
</dbReference>
<dbReference type="RefSeq" id="WP_002212092.1">
    <property type="nucleotide sequence ID" value="NZ_ACNQ01000019.1"/>
</dbReference>
<dbReference type="SMR" id="Q1CNR7"/>
<dbReference type="KEGG" id="ypn:YPN_0030"/>
<dbReference type="HOGENOM" id="CLU_032473_4_1_6"/>
<dbReference type="Proteomes" id="UP000008936">
    <property type="component" value="Chromosome"/>
</dbReference>
<dbReference type="GO" id="GO:0009279">
    <property type="term" value="C:cell outer membrane"/>
    <property type="evidence" value="ECO:0007669"/>
    <property type="project" value="UniProtKB-SubCell"/>
</dbReference>
<dbReference type="GO" id="GO:0046930">
    <property type="term" value="C:pore complex"/>
    <property type="evidence" value="ECO:0007669"/>
    <property type="project" value="UniProtKB-KW"/>
</dbReference>
<dbReference type="GO" id="GO:0042958">
    <property type="term" value="F:maltodextrin transmembrane transporter activity"/>
    <property type="evidence" value="ECO:0007669"/>
    <property type="project" value="InterPro"/>
</dbReference>
<dbReference type="GO" id="GO:0015481">
    <property type="term" value="F:maltose transporting porin activity"/>
    <property type="evidence" value="ECO:0007669"/>
    <property type="project" value="InterPro"/>
</dbReference>
<dbReference type="GO" id="GO:0006811">
    <property type="term" value="P:monoatomic ion transport"/>
    <property type="evidence" value="ECO:0007669"/>
    <property type="project" value="UniProtKB-KW"/>
</dbReference>
<dbReference type="CDD" id="cd01346">
    <property type="entry name" value="Maltoporin-like"/>
    <property type="match status" value="1"/>
</dbReference>
<dbReference type="FunFam" id="2.40.170.10:FF:000001">
    <property type="entry name" value="Maltoporin"/>
    <property type="match status" value="1"/>
</dbReference>
<dbReference type="Gene3D" id="2.40.170.10">
    <property type="entry name" value="Porin, LamB type"/>
    <property type="match status" value="1"/>
</dbReference>
<dbReference type="HAMAP" id="MF_01301">
    <property type="entry name" value="LamB"/>
    <property type="match status" value="1"/>
</dbReference>
<dbReference type="InterPro" id="IPR050286">
    <property type="entry name" value="G_neg_Bact_CarbUptk_Porin"/>
</dbReference>
<dbReference type="InterPro" id="IPR023738">
    <property type="entry name" value="Maltoporin"/>
</dbReference>
<dbReference type="InterPro" id="IPR003192">
    <property type="entry name" value="Porin_LamB"/>
</dbReference>
<dbReference type="InterPro" id="IPR036998">
    <property type="entry name" value="Porin_LamB_sf"/>
</dbReference>
<dbReference type="NCBIfam" id="NF006860">
    <property type="entry name" value="PRK09360.1"/>
    <property type="match status" value="1"/>
</dbReference>
<dbReference type="PANTHER" id="PTHR38762">
    <property type="entry name" value="CRYPTIC OUTER MEMBRANE PORIN BGLH-RELATED"/>
    <property type="match status" value="1"/>
</dbReference>
<dbReference type="PANTHER" id="PTHR38762:SF1">
    <property type="entry name" value="CRYPTIC OUTER MEMBRANE PORIN BGLH-RELATED"/>
    <property type="match status" value="1"/>
</dbReference>
<dbReference type="Pfam" id="PF02264">
    <property type="entry name" value="LamB"/>
    <property type="match status" value="1"/>
</dbReference>
<dbReference type="SUPFAM" id="SSF56935">
    <property type="entry name" value="Porins"/>
    <property type="match status" value="1"/>
</dbReference>
<sequence>MITLRKLPIALAVAAGVLSTQAMAVDFHGYARSGIGWTASGGEQQCFQTTGAQSKYRLGNECETYAELKLGQELWKEGDKSFYLDTNVAYSVSQRDDWESTDPAFREANVQGKNLIESLPGSTIWAGKRFYQRHDVHMIDFYYWDISGPGAGLETIDLGFGKLSVAATRNSESGGSSAWIDNQRENAKYTINNVYDVRLAGLETNPGGSLELGVDYGRADTQEGYSLAPNASKDGVMLTAEHTQSLMGGFNKFVVQYATDSMTSYNTGHSQGTSVNNNGHLLRVIDHGAINLAEKWDMMYVALYQDIDLDNNNGNTWYSVGVRPMYKWTPIMSTLLEAGYDNVKSQHTGERNGQYKLTLAQQWQAGDSIWSRPAIRVFATYANWDEKWGYSDTTGVAQDGTIGTNSRGKNNEVTFGAQFEAWW</sequence>
<reference key="1">
    <citation type="journal article" date="2006" name="J. Bacteriol.">
        <title>Complete genome sequence of Yersinia pestis strains Antiqua and Nepal516: evidence of gene reduction in an emerging pathogen.</title>
        <authorList>
            <person name="Chain P.S.G."/>
            <person name="Hu P."/>
            <person name="Malfatti S.A."/>
            <person name="Radnedge L."/>
            <person name="Larimer F."/>
            <person name="Vergez L.M."/>
            <person name="Worsham P."/>
            <person name="Chu M.C."/>
            <person name="Andersen G.L."/>
        </authorList>
    </citation>
    <scope>NUCLEOTIDE SEQUENCE [LARGE SCALE GENOMIC DNA]</scope>
    <source>
        <strain>Nepal516</strain>
    </source>
</reference>
<reference key="2">
    <citation type="submission" date="2009-04" db="EMBL/GenBank/DDBJ databases">
        <title>Yersinia pestis Nepal516A whole genome shotgun sequencing project.</title>
        <authorList>
            <person name="Plunkett G. III"/>
            <person name="Anderson B.D."/>
            <person name="Baumler D.J."/>
            <person name="Burland V."/>
            <person name="Cabot E.L."/>
            <person name="Glasner J.D."/>
            <person name="Mau B."/>
            <person name="Neeno-Eckwall E."/>
            <person name="Perna N.T."/>
            <person name="Munk A.C."/>
            <person name="Tapia R."/>
            <person name="Green L.D."/>
            <person name="Rogers Y.C."/>
            <person name="Detter J.C."/>
            <person name="Bruce D.C."/>
            <person name="Brettin T.S."/>
        </authorList>
    </citation>
    <scope>NUCLEOTIDE SEQUENCE [LARGE SCALE GENOMIC DNA]</scope>
    <source>
        <strain>Nepal516</strain>
    </source>
</reference>
<gene>
    <name evidence="1" type="primary">lamB1</name>
    <name type="ordered locus">YPN_0030</name>
    <name type="ORF">YP516_4566</name>
</gene>
<keyword id="KW-0998">Cell outer membrane</keyword>
<keyword id="KW-0406">Ion transport</keyword>
<keyword id="KW-0472">Membrane</keyword>
<keyword id="KW-0626">Porin</keyword>
<keyword id="KW-0732">Signal</keyword>
<keyword id="KW-0762">Sugar transport</keyword>
<keyword id="KW-0812">Transmembrane</keyword>
<keyword id="KW-1134">Transmembrane beta strand</keyword>
<keyword id="KW-0813">Transport</keyword>
<comment type="function">
    <text evidence="1">Involved in the transport of maltose and maltodextrins.</text>
</comment>
<comment type="catalytic activity">
    <reaction evidence="1">
        <text>beta-maltose(in) = beta-maltose(out)</text>
        <dbReference type="Rhea" id="RHEA:29731"/>
        <dbReference type="ChEBI" id="CHEBI:18147"/>
    </reaction>
</comment>
<comment type="subunit">
    <text evidence="1">Homotrimer formed of three 18-stranded antiparallel beta-barrels, containing three independent channels.</text>
</comment>
<comment type="subcellular location">
    <subcellularLocation>
        <location evidence="1">Cell outer membrane</location>
        <topology evidence="1">Multi-pass membrane protein</topology>
    </subcellularLocation>
</comment>
<comment type="induction">
    <text evidence="1">By maltose.</text>
</comment>
<comment type="similarity">
    <text evidence="1">Belongs to the porin LamB (TC 1.B.3) family.</text>
</comment>
<organism>
    <name type="scientific">Yersinia pestis bv. Antiqua (strain Nepal516)</name>
    <dbReference type="NCBI Taxonomy" id="377628"/>
    <lineage>
        <taxon>Bacteria</taxon>
        <taxon>Pseudomonadati</taxon>
        <taxon>Pseudomonadota</taxon>
        <taxon>Gammaproteobacteria</taxon>
        <taxon>Enterobacterales</taxon>
        <taxon>Yersiniaceae</taxon>
        <taxon>Yersinia</taxon>
    </lineage>
</organism>
<evidence type="ECO:0000255" key="1">
    <source>
        <dbReference type="HAMAP-Rule" id="MF_01301"/>
    </source>
</evidence>